<accession>P76251</accession>
<accession>O08474</accession>
<accession>O08475</accession>
<reference key="1">
    <citation type="journal article" date="1996" name="DNA Res.">
        <title>A 460-kb DNA sequence of the Escherichia coli K-12 genome corresponding to the 40.1-50.0 min region on the linkage map.</title>
        <authorList>
            <person name="Itoh T."/>
            <person name="Aiba H."/>
            <person name="Baba T."/>
            <person name="Fujita K."/>
            <person name="Hayashi K."/>
            <person name="Inada T."/>
            <person name="Isono K."/>
            <person name="Kasai H."/>
            <person name="Kimura S."/>
            <person name="Kitakawa M."/>
            <person name="Kitagawa M."/>
            <person name="Makino K."/>
            <person name="Miki T."/>
            <person name="Mizobuchi K."/>
            <person name="Mori H."/>
            <person name="Mori T."/>
            <person name="Motomura K."/>
            <person name="Nakade S."/>
            <person name="Nakamura Y."/>
            <person name="Nashimoto H."/>
            <person name="Nishio Y."/>
            <person name="Oshima T."/>
            <person name="Saito N."/>
            <person name="Sampei G."/>
            <person name="Seki Y."/>
            <person name="Sivasundaram S."/>
            <person name="Tagami H."/>
            <person name="Takeda J."/>
            <person name="Takemoto K."/>
            <person name="Wada C."/>
            <person name="Yamamoto Y."/>
            <person name="Horiuchi T."/>
        </authorList>
    </citation>
    <scope>NUCLEOTIDE SEQUENCE [LARGE SCALE GENOMIC DNA]</scope>
    <source>
        <strain>K12 / W3110 / ATCC 27325 / DSM 5911</strain>
    </source>
</reference>
<reference key="2">
    <citation type="journal article" date="1997" name="Science">
        <title>The complete genome sequence of Escherichia coli K-12.</title>
        <authorList>
            <person name="Blattner F.R."/>
            <person name="Plunkett G. III"/>
            <person name="Bloch C.A."/>
            <person name="Perna N.T."/>
            <person name="Burland V."/>
            <person name="Riley M."/>
            <person name="Collado-Vides J."/>
            <person name="Glasner J.D."/>
            <person name="Rode C.K."/>
            <person name="Mayhew G.F."/>
            <person name="Gregor J."/>
            <person name="Davis N.W."/>
            <person name="Kirkpatrick H.A."/>
            <person name="Goeden M.A."/>
            <person name="Rose D.J."/>
            <person name="Mau B."/>
            <person name="Shao Y."/>
        </authorList>
    </citation>
    <scope>NUCLEOTIDE SEQUENCE [LARGE SCALE GENOMIC DNA]</scope>
    <source>
        <strain>K12 / MG1655 / ATCC 47076</strain>
    </source>
</reference>
<reference key="3">
    <citation type="journal article" date="2006" name="Mol. Syst. Biol.">
        <title>Highly accurate genome sequences of Escherichia coli K-12 strains MG1655 and W3110.</title>
        <authorList>
            <person name="Hayashi K."/>
            <person name="Morooka N."/>
            <person name="Yamamoto Y."/>
            <person name="Fujita K."/>
            <person name="Isono K."/>
            <person name="Choi S."/>
            <person name="Ohtsubo E."/>
            <person name="Baba T."/>
            <person name="Wanner B.L."/>
            <person name="Mori H."/>
            <person name="Horiuchi T."/>
        </authorList>
    </citation>
    <scope>NUCLEOTIDE SEQUENCE [LARGE SCALE GENOMIC DNA]</scope>
    <source>
        <strain>K12 / W3110 / ATCC 27325 / DSM 5911</strain>
    </source>
</reference>
<reference key="4">
    <citation type="journal article" date="2006" name="Proc. Natl. Acad. Sci. U.S.A.">
        <title>Systems approach to refining genome annotation.</title>
        <authorList>
            <person name="Reed J.L."/>
            <person name="Patel T.R."/>
            <person name="Chen K.H."/>
            <person name="Joyce A.R."/>
            <person name="Applebee M.K."/>
            <person name="Herring C.D."/>
            <person name="Bui O.T."/>
            <person name="Knight E.M."/>
            <person name="Fong S.S."/>
            <person name="Palsson B.O."/>
        </authorList>
    </citation>
    <scope>CATALYTIC ACTIVITY</scope>
    <scope>DISRUPTION PHENOTYPE</scope>
</reference>
<reference key="5">
    <citation type="journal article" date="2010" name="J. Bacteriol.">
        <title>Regulation of aerobic and anaerobic D-malate metabolism of Escherichia coli by the LysR-type regulator DmlR (YeaT).</title>
        <authorList>
            <person name="Lukas H."/>
            <person name="Reimann J."/>
            <person name="Kim O.B."/>
            <person name="Grimpo J."/>
            <person name="Unden G."/>
        </authorList>
    </citation>
    <scope>FUNCTION</scope>
    <scope>CATALYTIC ACTIVITY</scope>
    <scope>SUBSTRATE SPECIFICITY</scope>
    <scope>ROLE IN D-MALATE UTILIZATION</scope>
    <scope>INDUCTION</scope>
    <scope>DISRUPTION PHENOTYPE</scope>
    <source>
        <strain>K12 / MC4100 / ATCC 35695 / DSM 6574</strain>
    </source>
</reference>
<organism>
    <name type="scientific">Escherichia coli (strain K12)</name>
    <dbReference type="NCBI Taxonomy" id="83333"/>
    <lineage>
        <taxon>Bacteria</taxon>
        <taxon>Pseudomonadati</taxon>
        <taxon>Pseudomonadota</taxon>
        <taxon>Gammaproteobacteria</taxon>
        <taxon>Enterobacterales</taxon>
        <taxon>Enterobacteriaceae</taxon>
        <taxon>Escherichia</taxon>
    </lineage>
</organism>
<keyword id="KW-0963">Cytoplasm</keyword>
<keyword id="KW-0460">Magnesium</keyword>
<keyword id="KW-0464">Manganese</keyword>
<keyword id="KW-0479">Metal-binding</keyword>
<keyword id="KW-0520">NAD</keyword>
<keyword id="KW-0560">Oxidoreductase</keyword>
<keyword id="KW-1185">Reference proteome</keyword>
<comment type="function">
    <text evidence="4">Catalyzes the NAD(+)-dependent oxidative decarboxylation of D-malate into pyruvate. Is essential for aerobic growth on D-malate as the sole carbon source. But is not required for anaerobic D-malate utilization, although DmlA is expressed and active in those conditions. Appears to be not able to use L-tartrate as a substrate for dehydrogenation instead of D-malate.</text>
</comment>
<comment type="catalytic activity">
    <reaction evidence="3 4">
        <text>(R)-malate + NAD(+) = pyruvate + CO2 + NADH</text>
        <dbReference type="Rhea" id="RHEA:18365"/>
        <dbReference type="ChEBI" id="CHEBI:15361"/>
        <dbReference type="ChEBI" id="CHEBI:15588"/>
        <dbReference type="ChEBI" id="CHEBI:16526"/>
        <dbReference type="ChEBI" id="CHEBI:57540"/>
        <dbReference type="ChEBI" id="CHEBI:57945"/>
        <dbReference type="EC" id="1.1.1.83"/>
    </reaction>
</comment>
<comment type="cofactor">
    <cofactor evidence="1">
        <name>Mg(2+)</name>
        <dbReference type="ChEBI" id="CHEBI:18420"/>
    </cofactor>
    <cofactor evidence="1">
        <name>Mn(2+)</name>
        <dbReference type="ChEBI" id="CHEBI:29035"/>
    </cofactor>
    <text evidence="1">Binds 1 Mg(2+) or Mn(2+) ion per subunit.</text>
</comment>
<comment type="interaction">
    <interactant intactId="EBI-560661">
        <id>P76251</id>
    </interactant>
    <interactant intactId="EBI-301077">
        <id>P0CE47</id>
        <label>tufA</label>
    </interactant>
    <organismsDiffer>false</organismsDiffer>
    <experiments>2</experiments>
</comment>
<comment type="subcellular location">
    <subcellularLocation>
        <location evidence="1">Cytoplasm</location>
    </subcellularLocation>
</comment>
<comment type="induction">
    <text evidence="4">By the transcriptional regulator DmlR in the presence of D-malate or L- or meso-tartrate, under aerobic conditions. Is not induced by L-malate, D-tartrate or succinate. Is also induced at high levels under anaerobic conditions in the presence of D-malate and its expression is more than 5-fold greater than the one under aerobic conditions. Repressed by glucose or nitrate under anaerobic conditions. During aerobic growth, appears to be repressed by the DcuS-DcuR two-component system, and is not repressed by glucose.</text>
</comment>
<comment type="disruption phenotype">
    <text evidence="3 4">Deletion of dmlA inhibits aerobic growth on D-malate but does not impair slow anaerobic growth on D-malate.</text>
</comment>
<comment type="miscellaneous">
    <text>Aerobic growth on D-malate requires, in addition to DmlA, the presence of the aerobic C4-dicarboxylate transporter DctA, for D-malate uptake. Meso-tartrate or L-tartrate are not able to support aerobic growth. Slow anaerobic growth on D-malate is observed only when glycerol is also provided as an electron donor, and D-malate is used in fumarate respiration, so is not dependent on DmlA.</text>
</comment>
<comment type="similarity">
    <text evidence="5">Belongs to the isocitrate and isopropylmalate dehydrogenases family.</text>
</comment>
<protein>
    <recommendedName>
        <fullName>D-malate dehydrogenase [decarboxylating]</fullName>
        <ecNumber>1.1.1.83</ecNumber>
    </recommendedName>
    <alternativeName>
        <fullName>D-malate degradation protein A</fullName>
    </alternativeName>
    <alternativeName>
        <fullName>D-malate oxidase</fullName>
    </alternativeName>
</protein>
<dbReference type="EC" id="1.1.1.83"/>
<dbReference type="EMBL" id="U00096">
    <property type="protein sequence ID" value="AAC74870.1"/>
    <property type="molecule type" value="Genomic_DNA"/>
</dbReference>
<dbReference type="EMBL" id="AP009048">
    <property type="protein sequence ID" value="BAA15595.1"/>
    <property type="molecule type" value="Genomic_DNA"/>
</dbReference>
<dbReference type="PIR" id="H64940">
    <property type="entry name" value="H64940"/>
</dbReference>
<dbReference type="RefSeq" id="NP_416314.1">
    <property type="nucleotide sequence ID" value="NC_000913.3"/>
</dbReference>
<dbReference type="RefSeq" id="WP_000978494.1">
    <property type="nucleotide sequence ID" value="NZ_STEB01000009.1"/>
</dbReference>
<dbReference type="SMR" id="P76251"/>
<dbReference type="BioGRID" id="4260335">
    <property type="interactions" value="24"/>
</dbReference>
<dbReference type="DIP" id="DIP-11800N"/>
<dbReference type="FunCoup" id="P76251">
    <property type="interactions" value="281"/>
</dbReference>
<dbReference type="IntAct" id="P76251">
    <property type="interactions" value="3"/>
</dbReference>
<dbReference type="STRING" id="511145.b1800"/>
<dbReference type="jPOST" id="P76251"/>
<dbReference type="PaxDb" id="511145-b1800"/>
<dbReference type="EnsemblBacteria" id="AAC74870">
    <property type="protein sequence ID" value="AAC74870"/>
    <property type="gene ID" value="b1800"/>
</dbReference>
<dbReference type="GeneID" id="75202626"/>
<dbReference type="GeneID" id="946319"/>
<dbReference type="KEGG" id="ecj:JW1789"/>
<dbReference type="KEGG" id="eco:b1800"/>
<dbReference type="KEGG" id="ecoc:C3026_10260"/>
<dbReference type="PATRIC" id="fig|1411691.4.peg.453"/>
<dbReference type="EchoBASE" id="EB3280"/>
<dbReference type="eggNOG" id="COG0473">
    <property type="taxonomic scope" value="Bacteria"/>
</dbReference>
<dbReference type="HOGENOM" id="CLU_031953_0_1_6"/>
<dbReference type="InParanoid" id="P76251"/>
<dbReference type="OMA" id="PWSCDYY"/>
<dbReference type="OrthoDB" id="9767905at2"/>
<dbReference type="PhylomeDB" id="P76251"/>
<dbReference type="BioCyc" id="EcoCyc:G6986-MONOMER"/>
<dbReference type="BioCyc" id="MetaCyc:G6986-MONOMER"/>
<dbReference type="BRENDA" id="1.1.1.83">
    <property type="organism ID" value="2026"/>
</dbReference>
<dbReference type="PRO" id="PR:P76251"/>
<dbReference type="Proteomes" id="UP000000625">
    <property type="component" value="Chromosome"/>
</dbReference>
<dbReference type="GO" id="GO:0005737">
    <property type="term" value="C:cytoplasm"/>
    <property type="evidence" value="ECO:0007669"/>
    <property type="project" value="UniProtKB-SubCell"/>
</dbReference>
<dbReference type="GO" id="GO:0003862">
    <property type="term" value="F:3-isopropylmalate dehydrogenase activity"/>
    <property type="evidence" value="ECO:0000314"/>
    <property type="project" value="EcoCyc"/>
</dbReference>
<dbReference type="GO" id="GO:0046553">
    <property type="term" value="F:D-malate dehydrogenase (decarboxylating) (NAD+) activity"/>
    <property type="evidence" value="ECO:0000314"/>
    <property type="project" value="UniProtKB"/>
</dbReference>
<dbReference type="GO" id="GO:0000287">
    <property type="term" value="F:magnesium ion binding"/>
    <property type="evidence" value="ECO:0000314"/>
    <property type="project" value="EcoCyc"/>
</dbReference>
<dbReference type="GO" id="GO:0051287">
    <property type="term" value="F:NAD binding"/>
    <property type="evidence" value="ECO:0007669"/>
    <property type="project" value="InterPro"/>
</dbReference>
<dbReference type="GO" id="GO:0009027">
    <property type="term" value="F:tartrate dehydrogenase activity"/>
    <property type="evidence" value="ECO:0000314"/>
    <property type="project" value="EcoCyc"/>
</dbReference>
<dbReference type="GO" id="GO:0006108">
    <property type="term" value="P:malate metabolic process"/>
    <property type="evidence" value="ECO:0000314"/>
    <property type="project" value="UniProtKB"/>
</dbReference>
<dbReference type="FunFam" id="3.40.718.10:FF:000013">
    <property type="entry name" value="Tartrate dehydrogenase"/>
    <property type="match status" value="1"/>
</dbReference>
<dbReference type="Gene3D" id="3.40.718.10">
    <property type="entry name" value="Isopropylmalate Dehydrogenase"/>
    <property type="match status" value="1"/>
</dbReference>
<dbReference type="InterPro" id="IPR050501">
    <property type="entry name" value="ICDH/IPMDH"/>
</dbReference>
<dbReference type="InterPro" id="IPR019818">
    <property type="entry name" value="IsoCit/isopropylmalate_DH_CS"/>
</dbReference>
<dbReference type="InterPro" id="IPR024084">
    <property type="entry name" value="IsoPropMal-DH-like_dom"/>
</dbReference>
<dbReference type="InterPro" id="IPR011829">
    <property type="entry name" value="TTC_DH"/>
</dbReference>
<dbReference type="NCBIfam" id="TIGR02089">
    <property type="entry name" value="TTC"/>
    <property type="match status" value="1"/>
</dbReference>
<dbReference type="PANTHER" id="PTHR43275">
    <property type="entry name" value="D-MALATE DEHYDROGENASE [DECARBOXYLATING]"/>
    <property type="match status" value="1"/>
</dbReference>
<dbReference type="PANTHER" id="PTHR43275:SF1">
    <property type="entry name" value="D-MALATE DEHYDROGENASE [DECARBOXYLATING]"/>
    <property type="match status" value="1"/>
</dbReference>
<dbReference type="Pfam" id="PF00180">
    <property type="entry name" value="Iso_dh"/>
    <property type="match status" value="1"/>
</dbReference>
<dbReference type="SMART" id="SM01329">
    <property type="entry name" value="Iso_dh"/>
    <property type="match status" value="1"/>
</dbReference>
<dbReference type="SUPFAM" id="SSF53659">
    <property type="entry name" value="Isocitrate/Isopropylmalate dehydrogenase-like"/>
    <property type="match status" value="1"/>
</dbReference>
<dbReference type="PROSITE" id="PS00470">
    <property type="entry name" value="IDH_IMDH"/>
    <property type="match status" value="1"/>
</dbReference>
<evidence type="ECO:0000250" key="1"/>
<evidence type="ECO:0000250" key="2">
    <source>
        <dbReference type="UniProtKB" id="P37412"/>
    </source>
</evidence>
<evidence type="ECO:0000269" key="3">
    <source>
    </source>
</evidence>
<evidence type="ECO:0000269" key="4">
    <source>
    </source>
</evidence>
<evidence type="ECO:0000305" key="5"/>
<sequence length="361" mass="40315">MMKTMRIAAIPGDGIGKEVLPEGIRVLQAAAERWGFALSFEQMEWASCEYYSHHGKMMPDDWHEQLSRFDAIYFGAVGWPDTVPDHISLWGSLLKFRREFDQYVNLRPVRLFPGVPCPLAGKQPGDIDFYVVRENTEGEYSSLGGRVNEGTEHEVVIQESVFTRRGVDRILRYAFELAQSRPRKTLTSATKSNGLAISMPYWDERVEAMAENYPEIRWDKQHIDILCARFVMQPERFDVVVASNLFGDILSDLGPACTGTIGIAPSANLNPERTFPSLFEPVHGSAPDIYGKNIANPIATIWAGAMMLDFLGNGDERFQQAHNGILAAIEEVIAHGPKTPDMKGNATTPQVADAICKIILR</sequence>
<gene>
    <name type="primary">dmlA</name>
    <name type="synonym">yeaU</name>
    <name type="ordered locus">b1800</name>
    <name type="ordered locus">JW1789</name>
</gene>
<name>DMLA_ECOLI</name>
<feature type="chain" id="PRO_0000083818" description="D-malate dehydrogenase [decarboxylating]">
    <location>
        <begin position="1"/>
        <end position="361"/>
    </location>
</feature>
<feature type="binding site" evidence="2">
    <location>
        <position position="224"/>
    </location>
    <ligand>
        <name>Mn(2+)</name>
        <dbReference type="ChEBI" id="CHEBI:29035"/>
    </ligand>
</feature>
<feature type="binding site" evidence="2">
    <location>
        <position position="248"/>
    </location>
    <ligand>
        <name>Mn(2+)</name>
        <dbReference type="ChEBI" id="CHEBI:29035"/>
    </ligand>
</feature>
<feature type="binding site" evidence="2">
    <location>
        <position position="252"/>
    </location>
    <ligand>
        <name>Mn(2+)</name>
        <dbReference type="ChEBI" id="CHEBI:29035"/>
    </ligand>
</feature>
<proteinExistence type="evidence at protein level"/>